<comment type="catalytic activity">
    <reaction>
        <text>alpha-D-mannose 1-phosphate + GTP + H(+) = GDP-alpha-D-mannose + diphosphate</text>
        <dbReference type="Rhea" id="RHEA:15229"/>
        <dbReference type="ChEBI" id="CHEBI:15378"/>
        <dbReference type="ChEBI" id="CHEBI:33019"/>
        <dbReference type="ChEBI" id="CHEBI:37565"/>
        <dbReference type="ChEBI" id="CHEBI:57527"/>
        <dbReference type="ChEBI" id="CHEBI:58409"/>
        <dbReference type="EC" id="2.7.7.13"/>
    </reaction>
</comment>
<comment type="pathway">
    <text>Nucleotide-sugar biosynthesis; GDP-alpha-D-mannose biosynthesis; GDP-alpha-D-mannose from alpha-D-mannose 1-phosphate (GTP route): step 1/1.</text>
</comment>
<comment type="similarity">
    <text evidence="1">Belongs to the transferase hexapeptide repeat family.</text>
</comment>
<protein>
    <recommendedName>
        <fullName>Mannose-1-phosphate guanyltransferase alpha-B</fullName>
        <ecNumber>2.7.7.13</ecNumber>
    </recommendedName>
    <alternativeName>
        <fullName>GDP-mannose pyrophosphorylase A-B</fullName>
    </alternativeName>
    <alternativeName>
        <fullName>GTP-mannose-1-phosphate guanylyltransferase alpha-b</fullName>
    </alternativeName>
</protein>
<gene>
    <name type="primary">gmppa-b</name>
</gene>
<keyword id="KW-0342">GTP-binding</keyword>
<keyword id="KW-0547">Nucleotide-binding</keyword>
<keyword id="KW-0548">Nucleotidyltransferase</keyword>
<keyword id="KW-1185">Reference proteome</keyword>
<keyword id="KW-0808">Transferase</keyword>
<evidence type="ECO:0000305" key="1"/>
<organism>
    <name type="scientific">Xenopus laevis</name>
    <name type="common">African clawed frog</name>
    <dbReference type="NCBI Taxonomy" id="8355"/>
    <lineage>
        <taxon>Eukaryota</taxon>
        <taxon>Metazoa</taxon>
        <taxon>Chordata</taxon>
        <taxon>Craniata</taxon>
        <taxon>Vertebrata</taxon>
        <taxon>Euteleostomi</taxon>
        <taxon>Amphibia</taxon>
        <taxon>Batrachia</taxon>
        <taxon>Anura</taxon>
        <taxon>Pipoidea</taxon>
        <taxon>Pipidae</taxon>
        <taxon>Xenopodinae</taxon>
        <taxon>Xenopus</taxon>
        <taxon>Xenopus</taxon>
    </lineage>
</organism>
<proteinExistence type="evidence at transcript level"/>
<sequence>MLKAVILIGGPQKGTRFRPLSFEVPKPLFPVAGVPMVQHHIEACSKVPNLKEILLIGFYQPNEALSSFLLKAQQEFKVAIRYLQEYSALGTGGGIYHFRDQILSGGPQAFFVMNADVCSEFPLVPMLDFHKQHGGSQSYVILGTTANRTQSLNYGCIVSNGDTQEVLHYVEKPGTFVSDIINCGIYLFSPSIFQHIAEVFQRNQLELQLFSCISEENSSWQRTEVIRLEQDVFTTLAGHGKLYVYKTEGCWSQIKSAGSAIYASRLYLSQYSTTHPERLASTKEGGPTIRGNVYIHPTANVDPSAVLGPNVSVGMGVTVGAGVRIRESIILHGAVLQDHSCVLNTIVGWDSMVGRWARVEGTPSDPNPNDPYSKIDSETLFREGKLTPSITILGCNVSIPAEVVILNSIVLPHKELSRSFKNQIIL</sequence>
<feature type="chain" id="PRO_0000327879" description="Mannose-1-phosphate guanyltransferase alpha-B">
    <location>
        <begin position="1"/>
        <end position="426"/>
    </location>
</feature>
<dbReference type="EC" id="2.7.7.13"/>
<dbReference type="EMBL" id="BC080405">
    <property type="protein sequence ID" value="AAH80405.1"/>
    <property type="molecule type" value="mRNA"/>
</dbReference>
<dbReference type="RefSeq" id="NP_001087596.1">
    <property type="nucleotide sequence ID" value="NM_001094127.1"/>
</dbReference>
<dbReference type="SMR" id="Q66KG5"/>
<dbReference type="DNASU" id="447420"/>
<dbReference type="GeneID" id="447420"/>
<dbReference type="KEGG" id="xla:447420"/>
<dbReference type="AGR" id="Xenbase:XB-GENE-984245"/>
<dbReference type="CTD" id="447420"/>
<dbReference type="OrthoDB" id="285674at2759"/>
<dbReference type="UniPathway" id="UPA00126">
    <property type="reaction ID" value="UER00930"/>
</dbReference>
<dbReference type="Proteomes" id="UP000186698">
    <property type="component" value="Chromosome 9_10L"/>
</dbReference>
<dbReference type="Bgee" id="447420">
    <property type="expression patterns" value="Expressed in testis and 19 other cell types or tissues"/>
</dbReference>
<dbReference type="GO" id="GO:0005737">
    <property type="term" value="C:cytoplasm"/>
    <property type="evidence" value="ECO:0000318"/>
    <property type="project" value="GO_Central"/>
</dbReference>
<dbReference type="GO" id="GO:0005525">
    <property type="term" value="F:GTP binding"/>
    <property type="evidence" value="ECO:0007669"/>
    <property type="project" value="UniProtKB-KW"/>
</dbReference>
<dbReference type="GO" id="GO:0004475">
    <property type="term" value="F:mannose-1-phosphate guanylyltransferase (GTP) activity"/>
    <property type="evidence" value="ECO:0007669"/>
    <property type="project" value="UniProtKB-EC"/>
</dbReference>
<dbReference type="GO" id="GO:0009298">
    <property type="term" value="P:GDP-mannose biosynthetic process"/>
    <property type="evidence" value="ECO:0007669"/>
    <property type="project" value="UniProtKB-UniPathway"/>
</dbReference>
<dbReference type="CDD" id="cd06428">
    <property type="entry name" value="M1P_guanylylT_A_like_N"/>
    <property type="match status" value="1"/>
</dbReference>
<dbReference type="FunFam" id="3.90.550.10:FF:000071">
    <property type="entry name" value="Mannose-1-phosphate guanyltransferase alpha"/>
    <property type="match status" value="1"/>
</dbReference>
<dbReference type="Gene3D" id="2.160.10.10">
    <property type="entry name" value="Hexapeptide repeat proteins"/>
    <property type="match status" value="1"/>
</dbReference>
<dbReference type="Gene3D" id="3.90.550.10">
    <property type="entry name" value="Spore Coat Polysaccharide Biosynthesis Protein SpsA, Chain A"/>
    <property type="match status" value="1"/>
</dbReference>
<dbReference type="InterPro" id="IPR056729">
    <property type="entry name" value="GMPPB_C"/>
</dbReference>
<dbReference type="InterPro" id="IPR018357">
    <property type="entry name" value="Hexapep_transf_CS"/>
</dbReference>
<dbReference type="InterPro" id="IPR050486">
    <property type="entry name" value="Mannose-1P_guanyltransferase"/>
</dbReference>
<dbReference type="InterPro" id="IPR005835">
    <property type="entry name" value="NTP_transferase_dom"/>
</dbReference>
<dbReference type="InterPro" id="IPR029044">
    <property type="entry name" value="Nucleotide-diphossugar_trans"/>
</dbReference>
<dbReference type="PANTHER" id="PTHR22572">
    <property type="entry name" value="SUGAR-1-PHOSPHATE GUANYL TRANSFERASE"/>
    <property type="match status" value="1"/>
</dbReference>
<dbReference type="Pfam" id="PF25087">
    <property type="entry name" value="GMPPB_C"/>
    <property type="match status" value="1"/>
</dbReference>
<dbReference type="Pfam" id="PF00483">
    <property type="entry name" value="NTP_transferase"/>
    <property type="match status" value="1"/>
</dbReference>
<dbReference type="SUPFAM" id="SSF53448">
    <property type="entry name" value="Nucleotide-diphospho-sugar transferases"/>
    <property type="match status" value="1"/>
</dbReference>
<dbReference type="PROSITE" id="PS00101">
    <property type="entry name" value="HEXAPEP_TRANSFERASES"/>
    <property type="match status" value="1"/>
</dbReference>
<reference key="1">
    <citation type="submission" date="2004-08" db="EMBL/GenBank/DDBJ databases">
        <authorList>
            <consortium name="NIH - Xenopus Gene Collection (XGC) project"/>
        </authorList>
    </citation>
    <scope>NUCLEOTIDE SEQUENCE [LARGE SCALE MRNA]</scope>
    <source>
        <tissue>Brain</tissue>
    </source>
</reference>
<name>GMPAB_XENLA</name>
<accession>Q66KG5</accession>